<reference key="1">
    <citation type="journal article" date="2001" name="Genome Res.">
        <title>The complete genome sequence of the lactic acid bacterium Lactococcus lactis ssp. lactis IL1403.</title>
        <authorList>
            <person name="Bolotin A."/>
            <person name="Wincker P."/>
            <person name="Mauger S."/>
            <person name="Jaillon O."/>
            <person name="Malarme K."/>
            <person name="Weissenbach J."/>
            <person name="Ehrlich S.D."/>
            <person name="Sorokin A."/>
        </authorList>
    </citation>
    <scope>NUCLEOTIDE SEQUENCE [LARGE SCALE GENOMIC DNA]</scope>
    <source>
        <strain>IL1403</strain>
    </source>
</reference>
<feature type="chain" id="PRO_0000157313" description="2-dehydropantoate 2-reductase">
    <location>
        <begin position="1"/>
        <end position="312"/>
    </location>
</feature>
<feature type="active site" description="Proton donor" evidence="1">
    <location>
        <position position="187"/>
    </location>
</feature>
<feature type="binding site" evidence="1">
    <location>
        <begin position="7"/>
        <end position="12"/>
    </location>
    <ligand>
        <name>NADP(+)</name>
        <dbReference type="ChEBI" id="CHEBI:58349"/>
    </ligand>
</feature>
<feature type="binding site" evidence="1">
    <location>
        <position position="105"/>
    </location>
    <ligand>
        <name>NADP(+)</name>
        <dbReference type="ChEBI" id="CHEBI:58349"/>
    </ligand>
</feature>
<feature type="binding site" evidence="1">
    <location>
        <position position="105"/>
    </location>
    <ligand>
        <name>substrate</name>
    </ligand>
</feature>
<feature type="binding site" evidence="1">
    <location>
        <position position="131"/>
    </location>
    <ligand>
        <name>NADP(+)</name>
        <dbReference type="ChEBI" id="CHEBI:58349"/>
    </ligand>
</feature>
<feature type="binding site" evidence="1">
    <location>
        <position position="191"/>
    </location>
    <ligand>
        <name>substrate</name>
    </ligand>
</feature>
<feature type="binding site" evidence="1">
    <location>
        <position position="195"/>
    </location>
    <ligand>
        <name>substrate</name>
    </ligand>
</feature>
<feature type="binding site" evidence="1">
    <location>
        <position position="260"/>
    </location>
    <ligand>
        <name>substrate</name>
    </ligand>
</feature>
<feature type="binding site" evidence="1">
    <location>
        <position position="273"/>
    </location>
    <ligand>
        <name>NADP(+)</name>
        <dbReference type="ChEBI" id="CHEBI:58349"/>
    </ligand>
</feature>
<organism>
    <name type="scientific">Lactococcus lactis subsp. lactis (strain IL1403)</name>
    <name type="common">Streptococcus lactis</name>
    <dbReference type="NCBI Taxonomy" id="272623"/>
    <lineage>
        <taxon>Bacteria</taxon>
        <taxon>Bacillati</taxon>
        <taxon>Bacillota</taxon>
        <taxon>Bacilli</taxon>
        <taxon>Lactobacillales</taxon>
        <taxon>Streptococcaceae</taxon>
        <taxon>Lactococcus</taxon>
    </lineage>
</organism>
<comment type="function">
    <text evidence="1">Catalyzes the NADPH-dependent reduction of ketopantoate into pantoic acid.</text>
</comment>
<comment type="catalytic activity">
    <reaction evidence="1">
        <text>(R)-pantoate + NADP(+) = 2-dehydropantoate + NADPH + H(+)</text>
        <dbReference type="Rhea" id="RHEA:16233"/>
        <dbReference type="ChEBI" id="CHEBI:11561"/>
        <dbReference type="ChEBI" id="CHEBI:15378"/>
        <dbReference type="ChEBI" id="CHEBI:15980"/>
        <dbReference type="ChEBI" id="CHEBI:57783"/>
        <dbReference type="ChEBI" id="CHEBI:58349"/>
        <dbReference type="EC" id="1.1.1.169"/>
    </reaction>
</comment>
<comment type="pathway">
    <text evidence="1">Cofactor biosynthesis; (R)-pantothenate biosynthesis; (R)-pantoate from 3-methyl-2-oxobutanoate: step 2/2.</text>
</comment>
<comment type="subcellular location">
    <subcellularLocation>
        <location evidence="1">Cytoplasm</location>
    </subcellularLocation>
</comment>
<comment type="similarity">
    <text evidence="2">Belongs to the ketopantoate reductase family.</text>
</comment>
<accession>Q9CFY8</accession>
<keyword id="KW-0963">Cytoplasm</keyword>
<keyword id="KW-0521">NADP</keyword>
<keyword id="KW-0560">Oxidoreductase</keyword>
<keyword id="KW-0566">Pantothenate biosynthesis</keyword>
<keyword id="KW-1185">Reference proteome</keyword>
<protein>
    <recommendedName>
        <fullName evidence="1">2-dehydropantoate 2-reductase</fullName>
        <ecNumber evidence="1">1.1.1.169</ecNumber>
    </recommendedName>
    <alternativeName>
        <fullName evidence="1">Ketopantoate reductase</fullName>
        <shortName evidence="1">KPR</shortName>
    </alternativeName>
</protein>
<evidence type="ECO:0000250" key="1">
    <source>
        <dbReference type="UniProtKB" id="P0A9J4"/>
    </source>
</evidence>
<evidence type="ECO:0000305" key="2"/>
<proteinExistence type="inferred from homology"/>
<gene>
    <name type="ordered locus">LL1323</name>
    <name type="ORF">L157055</name>
</gene>
<sequence length="312" mass="34444">MRITIAGAGAMGSRFGLMLHKGGNEVTLIDGWPEHVKAIKEHGLRANYNGEELTAHLSVELQSEISSKEKTDLIILFTKAMQLDKMLQDIKPLIDEHTKVLCLLNGIGHEDTIEKYVSKNNIFIGNTMWTAGLEGPGKAKLFGDGSVELQNLISGEEETAKKLAEILSESGLNAKYSNNIHYSIYRKACVNGTMNGLCTILDTNMAGLGETKPAHDMVVTIVNEFAAVAKFENVNLDIAEVVQHVETCFDPSTIGLHYPSMYQDLIKNNRLTEIDYINGAVSRKGKKYNVATPYCDFLTQLVHSKEELLKAK</sequence>
<dbReference type="EC" id="1.1.1.169" evidence="1"/>
<dbReference type="EMBL" id="AE005176">
    <property type="protein sequence ID" value="AAK05421.1"/>
    <property type="molecule type" value="Genomic_DNA"/>
</dbReference>
<dbReference type="PIR" id="C86790">
    <property type="entry name" value="C86790"/>
</dbReference>
<dbReference type="RefSeq" id="NP_267479.1">
    <property type="nucleotide sequence ID" value="NC_002662.1"/>
</dbReference>
<dbReference type="RefSeq" id="WP_010905887.1">
    <property type="nucleotide sequence ID" value="NC_002662.1"/>
</dbReference>
<dbReference type="SMR" id="Q9CFY8"/>
<dbReference type="PaxDb" id="272623-L157055"/>
<dbReference type="EnsemblBacteria" id="AAK05421">
    <property type="protein sequence ID" value="AAK05421"/>
    <property type="gene ID" value="L157055"/>
</dbReference>
<dbReference type="KEGG" id="lla:L157055"/>
<dbReference type="PATRIC" id="fig|272623.7.peg.1427"/>
<dbReference type="eggNOG" id="COG1893">
    <property type="taxonomic scope" value="Bacteria"/>
</dbReference>
<dbReference type="HOGENOM" id="CLU_031468_0_0_9"/>
<dbReference type="OrthoDB" id="9800163at2"/>
<dbReference type="UniPathway" id="UPA00028">
    <property type="reaction ID" value="UER00004"/>
</dbReference>
<dbReference type="Proteomes" id="UP000002196">
    <property type="component" value="Chromosome"/>
</dbReference>
<dbReference type="GO" id="GO:0005737">
    <property type="term" value="C:cytoplasm"/>
    <property type="evidence" value="ECO:0007669"/>
    <property type="project" value="UniProtKB-SubCell"/>
</dbReference>
<dbReference type="GO" id="GO:0008677">
    <property type="term" value="F:2-dehydropantoate 2-reductase activity"/>
    <property type="evidence" value="ECO:0007669"/>
    <property type="project" value="UniProtKB-EC"/>
</dbReference>
<dbReference type="GO" id="GO:0050661">
    <property type="term" value="F:NADP binding"/>
    <property type="evidence" value="ECO:0007669"/>
    <property type="project" value="TreeGrafter"/>
</dbReference>
<dbReference type="GO" id="GO:0015940">
    <property type="term" value="P:pantothenate biosynthetic process"/>
    <property type="evidence" value="ECO:0007669"/>
    <property type="project" value="UniProtKB-UniPathway"/>
</dbReference>
<dbReference type="Gene3D" id="1.10.1040.10">
    <property type="entry name" value="N-(1-d-carboxylethyl)-l-norvaline Dehydrogenase, domain 2"/>
    <property type="match status" value="1"/>
</dbReference>
<dbReference type="Gene3D" id="3.40.50.720">
    <property type="entry name" value="NAD(P)-binding Rossmann-like Domain"/>
    <property type="match status" value="1"/>
</dbReference>
<dbReference type="InterPro" id="IPR008927">
    <property type="entry name" value="6-PGluconate_DH-like_C_sf"/>
</dbReference>
<dbReference type="InterPro" id="IPR013328">
    <property type="entry name" value="6PGD_dom2"/>
</dbReference>
<dbReference type="InterPro" id="IPR003710">
    <property type="entry name" value="ApbA"/>
</dbReference>
<dbReference type="InterPro" id="IPR050838">
    <property type="entry name" value="Ketopantoate_reductase"/>
</dbReference>
<dbReference type="InterPro" id="IPR013752">
    <property type="entry name" value="KPA_reductase"/>
</dbReference>
<dbReference type="InterPro" id="IPR013332">
    <property type="entry name" value="KPR_N"/>
</dbReference>
<dbReference type="InterPro" id="IPR036291">
    <property type="entry name" value="NAD(P)-bd_dom_sf"/>
</dbReference>
<dbReference type="NCBIfam" id="TIGR00745">
    <property type="entry name" value="apbA_panE"/>
    <property type="match status" value="1"/>
</dbReference>
<dbReference type="NCBIfam" id="NF005088">
    <property type="entry name" value="PRK06522.1-2"/>
    <property type="match status" value="1"/>
</dbReference>
<dbReference type="PANTHER" id="PTHR43765:SF2">
    <property type="entry name" value="2-DEHYDROPANTOATE 2-REDUCTASE"/>
    <property type="match status" value="1"/>
</dbReference>
<dbReference type="PANTHER" id="PTHR43765">
    <property type="entry name" value="2-DEHYDROPANTOATE 2-REDUCTASE-RELATED"/>
    <property type="match status" value="1"/>
</dbReference>
<dbReference type="Pfam" id="PF02558">
    <property type="entry name" value="ApbA"/>
    <property type="match status" value="1"/>
</dbReference>
<dbReference type="Pfam" id="PF08546">
    <property type="entry name" value="ApbA_C"/>
    <property type="match status" value="1"/>
</dbReference>
<dbReference type="SUPFAM" id="SSF48179">
    <property type="entry name" value="6-phosphogluconate dehydrogenase C-terminal domain-like"/>
    <property type="match status" value="1"/>
</dbReference>
<dbReference type="SUPFAM" id="SSF51735">
    <property type="entry name" value="NAD(P)-binding Rossmann-fold domains"/>
    <property type="match status" value="1"/>
</dbReference>
<name>PANE_LACLA</name>